<protein>
    <recommendedName>
        <fullName evidence="6">Notoamide biosynthesis cluster protein J</fullName>
    </recommendedName>
</protein>
<sequence length="370" mass="41041">MRIMSIMLHLLATILLSSAVSAQNANAASTRRLIGEDRESGRRWGVAATDLGIPYDQHNGEIGFLFGDTVSTKWVQEAKDLRSPVMLRSGIHPGEDGGIVFESAAGVDGDGLAPRLFYNGDRGDDGTGTGTWEFTVLPNDGISFPETGEHIISYLSIMNFTTPWTPNYSGLAYSTDGNTFTRLPTKWLNNDNNTDPFQMWTMQRDGDWVYVFTVRSAPQYGPLMLQRVPWDKMTNKTEYQGWGWNGEDWGWQRPCSPILDGYFGEPSVRRLHDGTWAMVYLNASTSTPHIVSRSAKDPTGPWSEEKVQVNQEGDGSLLYGGFIHPWSTSKGNQLYLMVSNWTSTSNLSQTTEAVADYEGTVSVSQFTGTL</sequence>
<evidence type="ECO:0000255" key="1"/>
<evidence type="ECO:0000255" key="2">
    <source>
        <dbReference type="PROSITE-ProRule" id="PRU00498"/>
    </source>
</evidence>
<evidence type="ECO:0000269" key="3">
    <source>
    </source>
</evidence>
<evidence type="ECO:0000269" key="4">
    <source>
    </source>
</evidence>
<evidence type="ECO:0000269" key="5">
    <source>
    </source>
</evidence>
<evidence type="ECO:0000303" key="6">
    <source>
    </source>
</evidence>
<evidence type="ECO:0000305" key="7">
    <source>
    </source>
</evidence>
<organism>
    <name type="scientific">Aspergillus sp. (strain MF297-2)</name>
    <dbReference type="NCBI Taxonomy" id="877550"/>
    <lineage>
        <taxon>Eukaryota</taxon>
        <taxon>Fungi</taxon>
        <taxon>Dikarya</taxon>
        <taxon>Ascomycota</taxon>
        <taxon>Pezizomycotina</taxon>
        <taxon>Eurotiomycetes</taxon>
        <taxon>Eurotiomycetidae</taxon>
        <taxon>Eurotiales</taxon>
        <taxon>Aspergillaceae</taxon>
        <taxon>Aspergillus</taxon>
    </lineage>
</organism>
<comment type="function">
    <text evidence="4 5 7">Part of the gene cluster that mediates the biosynthesis of notoamide, a fungal indole alkaloid that belongs to a family of natural products containing a characteristic bicyclo[2.2.2]diazaoctane core (PubMed:20722388). The first step of notoamide biosynthesis involves coupling of L-proline and L-tryptophan by the bimodular NRPS notE, to produce cyclo-L-tryptophan-L-proline called brevianamide F (PubMed:20722388). The reverse prenyltransferase notF then acts as a deoxybrevianamide E synthase and converts brevianamide F to deoxybrevianamide E via reverse prenylation at C-2 of the indole ring leading to the bicyclo[2.2.2]diazaoctane core (PubMed:20722388). Deoxybrevianamide E is further hydroxylated at C-6 of the indole ring, likely catalyzed by the cytochrome P450 monooxygenase notG, to yield 6-hydroxy-deoxybrevianamide E (Probable). 6-hydroxy-deoxybrevianamide E is a specific substrate of the prenyltransferase notC for normal prenylation at C-7 to produce 6-hydroxy-7-prenyl-deoxybrevianamide, also called notoamide S (PubMed:20722388). As the proposed pivotal branching point in notoamide biosynthesis, notoamide S can be diverted to notoamide E through an oxidative pyran ring closure putatively catalyzed by either notH cytochrome P450 monooxygenase or the notD FAD-linked oxidoreductase (Probable). This step would be followed by an indole 2,3-epoxidation-initiated pinacol-like rearrangement catalyzed by the notB FAD-dependent monooxygenase leading to the formation of notoamide C and notoamide D (PubMed:22188465). On the other hand notoamide S is converted to notoamide T by notH (or notD), a bifunctional oxidase that also functions as the intramolecular Diels-Alderase responsible for generation of (+)-notoamide T (Probable). To generate antipodal (-)-notoaminide T, notH' (or notD') in Aspergillus versicolor is expected to catalyze a Diels-Alder reaction leading to the opposite stereochemistry (Probable). The remaining oxidoreductase notD (or notH) likely catalyzes the oxidative pyran ring formation to yield (+)-stephacidin A (Probable). The FAD-dependent monooxygenase notI is highly similar to notB and is predicted to catalyze a similar conversion from (+)-stephacidin A to (-)-notoamide B via the 2,3-epoxidation of (+)-stephacidin A followed by a pinacol-type rearrangement (Probable). Finally, it remains unclear which enzyme could be responsible for the final hydroxylation steps leading to notoamide A and sclerotiamide (Probable). The function of notJ in the notoamide biosynthesis has not been determined yet (Probable).</text>
</comment>
<comment type="biotechnology">
    <text evidence="3">Notoamides have been shown to exhibit antitumoral activities (PubMed:17304611). Notoamides A-C show moderate cytotoxicity against HeLa and L1210 cells with IC(50) values in the range of 22-52 mg/ml, but the IC(50) value of notoamide D is greater than 100 mg/ml (PubMed:17304611). Moreover, notoamide C induces G2/M-cell cycle arrest at a concentration of 6.3 mg/ml (PubMed:17304611).</text>
</comment>
<gene>
    <name evidence="6" type="primary">notJ</name>
</gene>
<accession>E1ACQ5</accession>
<keyword id="KW-0325">Glycoprotein</keyword>
<keyword id="KW-0732">Signal</keyword>
<proteinExistence type="evidence at protein level"/>
<name>NOTJ_ASPSM</name>
<reference key="1">
    <citation type="journal article" date="2010" name="J. Am. Chem. Soc.">
        <title>Genome-based characterization of two prenylation steps in the assembly of the stephacidin and notoamide anticancer agents in a marine-derived Aspergillus sp.</title>
        <authorList>
            <person name="Ding Y."/>
            <person name="de Wet J.R."/>
            <person name="Cavalcoli J."/>
            <person name="Li S."/>
            <person name="Greshock T.J."/>
            <person name="Miller K.A."/>
            <person name="Finefield J.M."/>
            <person name="Sunderhaus J.D."/>
            <person name="McAfoos T.J."/>
            <person name="Tsukamoto S."/>
            <person name="Williams R.M."/>
            <person name="Sherman D.H."/>
        </authorList>
    </citation>
    <scope>NUCLEOTIDE SEQUENCE [GENOMIC DNA]</scope>
    <source>
        <strain>MF297-2</strain>
    </source>
</reference>
<reference key="2">
    <citation type="journal article" date="2007" name="Angew. Chem. Int. Ed.">
        <title>Notoamides A-D: prenylated indole alkaloids isolated from a marine-derived fungus, Aspergillus sp.</title>
        <authorList>
            <person name="Kato H."/>
            <person name="Yoshida T."/>
            <person name="Tokue T."/>
            <person name="Nojiri Y."/>
            <person name="Hirota H."/>
            <person name="Ohta T."/>
            <person name="Williams R.M."/>
            <person name="Tsukamoto S."/>
        </authorList>
    </citation>
    <scope>BIOTECHNOLOGY</scope>
</reference>
<reference key="3">
    <citation type="journal article" date="2012" name="J. Am. Chem. Soc.">
        <title>Biochemical characterization of NotB as an FAD-dependent oxidase in the biosynthesis of notoamide indole alkaloids.</title>
        <authorList>
            <person name="Li S."/>
            <person name="Finefield J.M."/>
            <person name="Sunderhaus J.D."/>
            <person name="McAfoos T.J."/>
            <person name="Williams R.M."/>
            <person name="Sherman D.H."/>
        </authorList>
    </citation>
    <scope>FUNCTION</scope>
</reference>
<reference key="4">
    <citation type="journal article" date="2012" name="Med. Chem. Commun.">
        <title>Comparative analysis of the biosynthetic systems for fungal bicyclo[2.2.2]diazaoctane indole alkaloids: the (+)/(-)-notoamide, paraherquamide and malbrancheamide pathways.</title>
        <authorList>
            <person name="Li S."/>
            <person name="Anand K."/>
            <person name="Tran H."/>
            <person name="Yu F."/>
            <person name="Finefield J.M."/>
            <person name="Sunderhaus J.D."/>
            <person name="McAfoos T.J."/>
            <person name="Tsukamoto S."/>
            <person name="Williams R.M."/>
            <person name="Sherman D.H."/>
        </authorList>
    </citation>
    <scope>FUNCTION</scope>
</reference>
<feature type="signal peptide" evidence="1">
    <location>
        <begin position="1"/>
        <end position="22"/>
    </location>
</feature>
<feature type="chain" id="PRO_5003143467" description="Notoamide biosynthesis cluster protein J" evidence="1">
    <location>
        <begin position="23"/>
        <end position="370"/>
    </location>
</feature>
<feature type="glycosylation site" description="N-linked (GlcNAc...) asparagine" evidence="2">
    <location>
        <position position="159"/>
    </location>
</feature>
<feature type="glycosylation site" description="N-linked (GlcNAc...) asparagine" evidence="2">
    <location>
        <position position="167"/>
    </location>
</feature>
<feature type="glycosylation site" description="N-linked (GlcNAc...) asparagine" evidence="2">
    <location>
        <position position="192"/>
    </location>
</feature>
<feature type="glycosylation site" description="N-linked (GlcNAc...) asparagine" evidence="2">
    <location>
        <position position="235"/>
    </location>
</feature>
<feature type="glycosylation site" description="N-linked (GlcNAc...) asparagine" evidence="2">
    <location>
        <position position="282"/>
    </location>
</feature>
<feature type="glycosylation site" description="N-linked (GlcNAc...) asparagine" evidence="2">
    <location>
        <position position="340"/>
    </location>
</feature>
<feature type="glycosylation site" description="N-linked (GlcNAc...) asparagine" evidence="2">
    <location>
        <position position="346"/>
    </location>
</feature>
<dbReference type="EMBL" id="HM622670">
    <property type="protein sequence ID" value="ADM34143.1"/>
    <property type="molecule type" value="Genomic_DNA"/>
</dbReference>
<dbReference type="SMR" id="E1ACQ5"/>
<dbReference type="GlyCosmos" id="E1ACQ5">
    <property type="glycosylation" value="7 sites, No reported glycans"/>
</dbReference>
<dbReference type="InterPro" id="IPR025442">
    <property type="entry name" value="DUF4185"/>
</dbReference>
<dbReference type="InterPro" id="IPR023296">
    <property type="entry name" value="Glyco_hydro_beta-prop_sf"/>
</dbReference>
<dbReference type="Pfam" id="PF13810">
    <property type="entry name" value="DUF4185"/>
    <property type="match status" value="1"/>
</dbReference>
<dbReference type="SUPFAM" id="SSF75005">
    <property type="entry name" value="Arabinanase/levansucrase/invertase"/>
    <property type="match status" value="1"/>
</dbReference>